<sequence length="427" mass="48972">MALSGNCSRYYPRDQGAAVPNSFPEVIELNVGGQVYFTRHSTLISIPHSLLWKMFSPKRDTANDLAKDSKGRFFIDRDGFLFRYILDYLRDRQVVLPDHFPERGRLKREAEYFQLPDLVKLLAPEDVKQSPDEFCHSDFEDASQGSDTRICPPSSLLPHDRKWGFITVGYRGSCTLGREGQADAKFRRVPRILVCGRISLAKEVFGETLNESRDPDRAPERYTSRFYLKFKHLERAFDMLSECGFHMVACNSSVTASFVNQYTEDKIWSSYTEYVFYREPSRWSSSHCDCCCKNGKGDKGESGTSCNDLSTSSCDSQSEASSPQETVICGPVTRQSNIQTLDRPIKKGPVQLIQQSEMRRKSDLLRTLTSGSRESNISSKKKAAKEKLSIEEELEKCIQDFLKIKIPDRFPERKHPWQSELLRKYHL</sequence>
<gene>
    <name type="primary">Kctd16</name>
    <name type="synonym">Gm1267</name>
    <name type="synonym">Kiaa1317</name>
</gene>
<organism>
    <name type="scientific">Mus musculus</name>
    <name type="common">Mouse</name>
    <dbReference type="NCBI Taxonomy" id="10090"/>
    <lineage>
        <taxon>Eukaryota</taxon>
        <taxon>Metazoa</taxon>
        <taxon>Chordata</taxon>
        <taxon>Craniata</taxon>
        <taxon>Vertebrata</taxon>
        <taxon>Euteleostomi</taxon>
        <taxon>Mammalia</taxon>
        <taxon>Eutheria</taxon>
        <taxon>Euarchontoglires</taxon>
        <taxon>Glires</taxon>
        <taxon>Rodentia</taxon>
        <taxon>Myomorpha</taxon>
        <taxon>Muroidea</taxon>
        <taxon>Muridae</taxon>
        <taxon>Murinae</taxon>
        <taxon>Mus</taxon>
        <taxon>Mus</taxon>
    </lineage>
</organism>
<feature type="chain" id="PRO_0000248594" description="BTB/POZ domain-containing protein KCTD16">
    <location>
        <begin position="1"/>
        <end position="427"/>
    </location>
</feature>
<feature type="domain" description="BTB">
    <location>
        <begin position="25"/>
        <end position="98"/>
    </location>
</feature>
<feature type="modified residue" description="Phosphotyrosine" evidence="4">
    <location>
        <position position="112"/>
    </location>
</feature>
<feature type="modified residue" description="Phosphoserine" evidence="5">
    <location>
        <position position="130"/>
    </location>
</feature>
<feature type="modified residue" description="Phosphoserine" evidence="5">
    <location>
        <position position="137"/>
    </location>
</feature>
<feature type="modified residue" description="Phosphoserine" evidence="5">
    <location>
        <position position="143"/>
    </location>
</feature>
<feature type="modified residue" description="Phosphoserine" evidence="5">
    <location>
        <position position="146"/>
    </location>
</feature>
<feature type="sequence conflict" description="In Ref. 3; BAB24283." evidence="3" ref="3">
    <original>Q</original>
    <variation>E</variation>
    <location>
        <position position="317"/>
    </location>
</feature>
<comment type="function">
    <text evidence="2">Auxiliary subunit of GABA-B receptors that determine the pharmacology and kinetics of the receptor response. Increases agonist potency and markedly alter the G-protein signaling of the receptors by accelerating onset and promoting desensitization.</text>
</comment>
<comment type="subunit">
    <text evidence="1 2">Homopentamer; forms an open pentamer (By similarity). In contrast to other BTB domain-containing proteins, does not interact with CUL3 (By similarity). Interacts as a tetramer with GABBR1 and GABBR2 (PubMed:20400944).</text>
</comment>
<comment type="subcellular location">
    <subcellularLocation>
        <location evidence="2">Presynaptic cell membrane</location>
    </subcellularLocation>
    <subcellularLocation>
        <location evidence="2">Postsynaptic cell membrane</location>
    </subcellularLocation>
    <text evidence="2">Colocalizes with GABBR1.</text>
</comment>
<comment type="tissue specificity">
    <text evidence="2">Expressed in the brain, mainly in the hippocampus.</text>
</comment>
<reference key="1">
    <citation type="journal article" date="2009" name="PLoS Biol.">
        <title>Lineage-specific biology revealed by a finished genome assembly of the mouse.</title>
        <authorList>
            <person name="Church D.M."/>
            <person name="Goodstadt L."/>
            <person name="Hillier L.W."/>
            <person name="Zody M.C."/>
            <person name="Goldstein S."/>
            <person name="She X."/>
            <person name="Bult C.J."/>
            <person name="Agarwala R."/>
            <person name="Cherry J.L."/>
            <person name="DiCuccio M."/>
            <person name="Hlavina W."/>
            <person name="Kapustin Y."/>
            <person name="Meric P."/>
            <person name="Maglott D."/>
            <person name="Birtle Z."/>
            <person name="Marques A.C."/>
            <person name="Graves T."/>
            <person name="Zhou S."/>
            <person name="Teague B."/>
            <person name="Potamousis K."/>
            <person name="Churas C."/>
            <person name="Place M."/>
            <person name="Herschleb J."/>
            <person name="Runnheim R."/>
            <person name="Forrest D."/>
            <person name="Amos-Landgraf J."/>
            <person name="Schwartz D.C."/>
            <person name="Cheng Z."/>
            <person name="Lindblad-Toh K."/>
            <person name="Eichler E.E."/>
            <person name="Ponting C.P."/>
        </authorList>
    </citation>
    <scope>NUCLEOTIDE SEQUENCE [LARGE SCALE GENOMIC DNA]</scope>
    <source>
        <strain>C57BL/6J</strain>
    </source>
</reference>
<reference key="2">
    <citation type="submission" date="2005-02" db="EMBL/GenBank/DDBJ databases">
        <title>Prediction of the coding sequences of mouse homologues of KIAA gene. The complete nucleotide sequences of mouse KIAA-homologous cDNAs identified by screening of terminal sequences of cDNA clones randomly sampled from size-fractionated libraries.</title>
        <authorList>
            <person name="Okazaki N."/>
            <person name="Kikuno R.F."/>
            <person name="Ohara R."/>
            <person name="Inamoto S."/>
            <person name="Nagase T."/>
            <person name="Ohara O."/>
            <person name="Koga H."/>
        </authorList>
    </citation>
    <scope>NUCLEOTIDE SEQUENCE [LARGE SCALE MRNA] OF 10-427</scope>
    <source>
        <tissue>Brain</tissue>
    </source>
</reference>
<reference key="3">
    <citation type="journal article" date="2005" name="Science">
        <title>The transcriptional landscape of the mammalian genome.</title>
        <authorList>
            <person name="Carninci P."/>
            <person name="Kasukawa T."/>
            <person name="Katayama S."/>
            <person name="Gough J."/>
            <person name="Frith M.C."/>
            <person name="Maeda N."/>
            <person name="Oyama R."/>
            <person name="Ravasi T."/>
            <person name="Lenhard B."/>
            <person name="Wells C."/>
            <person name="Kodzius R."/>
            <person name="Shimokawa K."/>
            <person name="Bajic V.B."/>
            <person name="Brenner S.E."/>
            <person name="Batalov S."/>
            <person name="Forrest A.R."/>
            <person name="Zavolan M."/>
            <person name="Davis M.J."/>
            <person name="Wilming L.G."/>
            <person name="Aidinis V."/>
            <person name="Allen J.E."/>
            <person name="Ambesi-Impiombato A."/>
            <person name="Apweiler R."/>
            <person name="Aturaliya R.N."/>
            <person name="Bailey T.L."/>
            <person name="Bansal M."/>
            <person name="Baxter L."/>
            <person name="Beisel K.W."/>
            <person name="Bersano T."/>
            <person name="Bono H."/>
            <person name="Chalk A.M."/>
            <person name="Chiu K.P."/>
            <person name="Choudhary V."/>
            <person name="Christoffels A."/>
            <person name="Clutterbuck D.R."/>
            <person name="Crowe M.L."/>
            <person name="Dalla E."/>
            <person name="Dalrymple B.P."/>
            <person name="de Bono B."/>
            <person name="Della Gatta G."/>
            <person name="di Bernardo D."/>
            <person name="Down T."/>
            <person name="Engstrom P."/>
            <person name="Fagiolini M."/>
            <person name="Faulkner G."/>
            <person name="Fletcher C.F."/>
            <person name="Fukushima T."/>
            <person name="Furuno M."/>
            <person name="Futaki S."/>
            <person name="Gariboldi M."/>
            <person name="Georgii-Hemming P."/>
            <person name="Gingeras T.R."/>
            <person name="Gojobori T."/>
            <person name="Green R.E."/>
            <person name="Gustincich S."/>
            <person name="Harbers M."/>
            <person name="Hayashi Y."/>
            <person name="Hensch T.K."/>
            <person name="Hirokawa N."/>
            <person name="Hill D."/>
            <person name="Huminiecki L."/>
            <person name="Iacono M."/>
            <person name="Ikeo K."/>
            <person name="Iwama A."/>
            <person name="Ishikawa T."/>
            <person name="Jakt M."/>
            <person name="Kanapin A."/>
            <person name="Katoh M."/>
            <person name="Kawasawa Y."/>
            <person name="Kelso J."/>
            <person name="Kitamura H."/>
            <person name="Kitano H."/>
            <person name="Kollias G."/>
            <person name="Krishnan S.P."/>
            <person name="Kruger A."/>
            <person name="Kummerfeld S.K."/>
            <person name="Kurochkin I.V."/>
            <person name="Lareau L.F."/>
            <person name="Lazarevic D."/>
            <person name="Lipovich L."/>
            <person name="Liu J."/>
            <person name="Liuni S."/>
            <person name="McWilliam S."/>
            <person name="Madan Babu M."/>
            <person name="Madera M."/>
            <person name="Marchionni L."/>
            <person name="Matsuda H."/>
            <person name="Matsuzawa S."/>
            <person name="Miki H."/>
            <person name="Mignone F."/>
            <person name="Miyake S."/>
            <person name="Morris K."/>
            <person name="Mottagui-Tabar S."/>
            <person name="Mulder N."/>
            <person name="Nakano N."/>
            <person name="Nakauchi H."/>
            <person name="Ng P."/>
            <person name="Nilsson R."/>
            <person name="Nishiguchi S."/>
            <person name="Nishikawa S."/>
            <person name="Nori F."/>
            <person name="Ohara O."/>
            <person name="Okazaki Y."/>
            <person name="Orlando V."/>
            <person name="Pang K.C."/>
            <person name="Pavan W.J."/>
            <person name="Pavesi G."/>
            <person name="Pesole G."/>
            <person name="Petrovsky N."/>
            <person name="Piazza S."/>
            <person name="Reed J."/>
            <person name="Reid J.F."/>
            <person name="Ring B.Z."/>
            <person name="Ringwald M."/>
            <person name="Rost B."/>
            <person name="Ruan Y."/>
            <person name="Salzberg S.L."/>
            <person name="Sandelin A."/>
            <person name="Schneider C."/>
            <person name="Schoenbach C."/>
            <person name="Sekiguchi K."/>
            <person name="Semple C.A."/>
            <person name="Seno S."/>
            <person name="Sessa L."/>
            <person name="Sheng Y."/>
            <person name="Shibata Y."/>
            <person name="Shimada H."/>
            <person name="Shimada K."/>
            <person name="Silva D."/>
            <person name="Sinclair B."/>
            <person name="Sperling S."/>
            <person name="Stupka E."/>
            <person name="Sugiura K."/>
            <person name="Sultana R."/>
            <person name="Takenaka Y."/>
            <person name="Taki K."/>
            <person name="Tammoja K."/>
            <person name="Tan S.L."/>
            <person name="Tang S."/>
            <person name="Taylor M.S."/>
            <person name="Tegner J."/>
            <person name="Teichmann S.A."/>
            <person name="Ueda H.R."/>
            <person name="van Nimwegen E."/>
            <person name="Verardo R."/>
            <person name="Wei C.L."/>
            <person name="Yagi K."/>
            <person name="Yamanishi H."/>
            <person name="Zabarovsky E."/>
            <person name="Zhu S."/>
            <person name="Zimmer A."/>
            <person name="Hide W."/>
            <person name="Bult C."/>
            <person name="Grimmond S.M."/>
            <person name="Teasdale R.D."/>
            <person name="Liu E.T."/>
            <person name="Brusic V."/>
            <person name="Quackenbush J."/>
            <person name="Wahlestedt C."/>
            <person name="Mattick J.S."/>
            <person name="Hume D.A."/>
            <person name="Kai C."/>
            <person name="Sasaki D."/>
            <person name="Tomaru Y."/>
            <person name="Fukuda S."/>
            <person name="Kanamori-Katayama M."/>
            <person name="Suzuki M."/>
            <person name="Aoki J."/>
            <person name="Arakawa T."/>
            <person name="Iida J."/>
            <person name="Imamura K."/>
            <person name="Itoh M."/>
            <person name="Kato T."/>
            <person name="Kawaji H."/>
            <person name="Kawagashira N."/>
            <person name="Kawashima T."/>
            <person name="Kojima M."/>
            <person name="Kondo S."/>
            <person name="Konno H."/>
            <person name="Nakano K."/>
            <person name="Ninomiya N."/>
            <person name="Nishio T."/>
            <person name="Okada M."/>
            <person name="Plessy C."/>
            <person name="Shibata K."/>
            <person name="Shiraki T."/>
            <person name="Suzuki S."/>
            <person name="Tagami M."/>
            <person name="Waki K."/>
            <person name="Watahiki A."/>
            <person name="Okamura-Oho Y."/>
            <person name="Suzuki H."/>
            <person name="Kawai J."/>
            <person name="Hayashizaki Y."/>
        </authorList>
    </citation>
    <scope>NUCLEOTIDE SEQUENCE [LARGE SCALE MRNA] OF 317-427</scope>
    <source>
        <strain>C57BL/6J</strain>
        <tissue>Testis</tissue>
    </source>
</reference>
<reference key="4">
    <citation type="journal article" date="2008" name="J. Proteome Res.">
        <title>Large-scale identification and evolution indexing of tyrosine phosphorylation sites from murine brain.</title>
        <authorList>
            <person name="Ballif B.A."/>
            <person name="Carey G.R."/>
            <person name="Sunyaev S.R."/>
            <person name="Gygi S.P."/>
        </authorList>
    </citation>
    <scope>PHOSPHORYLATION [LARGE SCALE ANALYSIS] AT TYR-112</scope>
    <scope>IDENTIFICATION BY MASS SPECTROMETRY [LARGE SCALE ANALYSIS]</scope>
    <source>
        <tissue>Brain</tissue>
    </source>
</reference>
<reference key="5">
    <citation type="journal article" date="2010" name="Cell">
        <title>A tissue-specific atlas of mouse protein phosphorylation and expression.</title>
        <authorList>
            <person name="Huttlin E.L."/>
            <person name="Jedrychowski M.P."/>
            <person name="Elias J.E."/>
            <person name="Goswami T."/>
            <person name="Rad R."/>
            <person name="Beausoleil S.A."/>
            <person name="Villen J."/>
            <person name="Haas W."/>
            <person name="Sowa M.E."/>
            <person name="Gygi S.P."/>
        </authorList>
    </citation>
    <scope>PHOSPHORYLATION [LARGE SCALE ANALYSIS] AT SER-130; SER-137; SER-143 AND SER-146</scope>
    <scope>IDENTIFICATION BY MASS SPECTROMETRY [LARGE SCALE ANALYSIS]</scope>
    <source>
        <tissue>Brain</tissue>
    </source>
</reference>
<reference key="6">
    <citation type="journal article" date="2010" name="Nature">
        <title>Native GABA(B) receptors are heteromultimers with a family of auxiliary subunits.</title>
        <authorList>
            <person name="Schwenk J."/>
            <person name="Metz M."/>
            <person name="Zolles G."/>
            <person name="Turecek R."/>
            <person name="Fritzius T."/>
            <person name="Bildl W."/>
            <person name="Tarusawa E."/>
            <person name="Kulik A."/>
            <person name="Unger A."/>
            <person name="Ivankova K."/>
            <person name="Seddik R."/>
            <person name="Tiao J.Y."/>
            <person name="Rajalu M."/>
            <person name="Trojanova J."/>
            <person name="Rohde V."/>
            <person name="Gassmann M."/>
            <person name="Schulte U."/>
            <person name="Fakler B."/>
            <person name="Bettler B."/>
        </authorList>
    </citation>
    <scope>FUNCTION</scope>
    <scope>INTERACTION WITH GABBR1 AND GABBR2</scope>
    <scope>TETRAMERIZATION</scope>
    <scope>SUBCELLULAR LOCATION</scope>
    <scope>TISSUE SPECIFICITY</scope>
</reference>
<evidence type="ECO:0000250" key="1">
    <source>
        <dbReference type="UniProtKB" id="Q68DU8"/>
    </source>
</evidence>
<evidence type="ECO:0000269" key="2">
    <source>
    </source>
</evidence>
<evidence type="ECO:0000305" key="3"/>
<evidence type="ECO:0007744" key="4">
    <source>
    </source>
</evidence>
<evidence type="ECO:0007744" key="5">
    <source>
    </source>
</evidence>
<keyword id="KW-1003">Cell membrane</keyword>
<keyword id="KW-0966">Cell projection</keyword>
<keyword id="KW-0472">Membrane</keyword>
<keyword id="KW-0597">Phosphoprotein</keyword>
<keyword id="KW-0628">Postsynaptic cell membrane</keyword>
<keyword id="KW-1185">Reference proteome</keyword>
<keyword id="KW-0770">Synapse</keyword>
<name>KCD16_MOUSE</name>
<protein>
    <recommendedName>
        <fullName>BTB/POZ domain-containing protein KCTD16</fullName>
    </recommendedName>
</protein>
<accession>Q5DTY9</accession>
<accession>Q78Y50</accession>
<proteinExistence type="evidence at protein level"/>
<dbReference type="EMBL" id="AC098707">
    <property type="status" value="NOT_ANNOTATED_CDS"/>
    <property type="molecule type" value="Genomic_DNA"/>
</dbReference>
<dbReference type="EMBL" id="AC127249">
    <property type="status" value="NOT_ANNOTATED_CDS"/>
    <property type="molecule type" value="Genomic_DNA"/>
</dbReference>
<dbReference type="EMBL" id="AK220381">
    <property type="protein sequence ID" value="BAD90438.1"/>
    <property type="molecule type" value="mRNA"/>
</dbReference>
<dbReference type="EMBL" id="AK005863">
    <property type="protein sequence ID" value="BAB24283.1"/>
    <property type="molecule type" value="mRNA"/>
</dbReference>
<dbReference type="CCDS" id="CCDS50264.1"/>
<dbReference type="RefSeq" id="NP_001357968.1">
    <property type="nucleotide sequence ID" value="NM_001371039.1"/>
</dbReference>
<dbReference type="RefSeq" id="NP_001357969.1">
    <property type="nucleotide sequence ID" value="NM_001371040.1"/>
</dbReference>
<dbReference type="RefSeq" id="NP_001357970.1">
    <property type="nucleotide sequence ID" value="NM_001371041.1"/>
</dbReference>
<dbReference type="RefSeq" id="NP_080411.1">
    <property type="nucleotide sequence ID" value="NM_026135.2"/>
</dbReference>
<dbReference type="RefSeq" id="XP_017173425.1">
    <property type="nucleotide sequence ID" value="XM_017317936.1"/>
</dbReference>
<dbReference type="RefSeq" id="XP_017173426.1">
    <property type="nucleotide sequence ID" value="XM_017317937.1"/>
</dbReference>
<dbReference type="RefSeq" id="XP_017173427.1">
    <property type="nucleotide sequence ID" value="XM_017317938.1"/>
</dbReference>
<dbReference type="RefSeq" id="XP_017173428.1">
    <property type="nucleotide sequence ID" value="XM_017317939.1"/>
</dbReference>
<dbReference type="SMR" id="Q5DTY9"/>
<dbReference type="BioGRID" id="238715">
    <property type="interactions" value="8"/>
</dbReference>
<dbReference type="CORUM" id="Q5DTY9"/>
<dbReference type="FunCoup" id="Q5DTY9">
    <property type="interactions" value="175"/>
</dbReference>
<dbReference type="IntAct" id="Q5DTY9">
    <property type="interactions" value="5"/>
</dbReference>
<dbReference type="MINT" id="Q5DTY9"/>
<dbReference type="STRING" id="10090.ENSMUSP00000158201"/>
<dbReference type="ChEMBL" id="CHEMBL4523323"/>
<dbReference type="GlyGen" id="Q5DTY9">
    <property type="glycosylation" value="2 sites, 1 N-linked glycan (1 site), 1 O-linked glycan (1 site)"/>
</dbReference>
<dbReference type="iPTMnet" id="Q5DTY9"/>
<dbReference type="PhosphoSitePlus" id="Q5DTY9"/>
<dbReference type="SwissPalm" id="Q5DTY9"/>
<dbReference type="PaxDb" id="10090-ENSMUSP00000089547"/>
<dbReference type="PeptideAtlas" id="Q5DTY9"/>
<dbReference type="ProteomicsDB" id="301759"/>
<dbReference type="Antibodypedia" id="45626">
    <property type="antibodies" value="79 antibodies from 16 providers"/>
</dbReference>
<dbReference type="DNASU" id="383348"/>
<dbReference type="Ensembl" id="ENSMUST00000091927.5">
    <property type="protein sequence ID" value="ENSMUSP00000089547.5"/>
    <property type="gene ID" value="ENSMUSG00000051401.8"/>
</dbReference>
<dbReference type="Ensembl" id="ENSMUST00000236889.2">
    <property type="protein sequence ID" value="ENSMUSP00000158201.2"/>
    <property type="gene ID" value="ENSMUSG00000051401.8"/>
</dbReference>
<dbReference type="GeneID" id="383348"/>
<dbReference type="KEGG" id="mmu:383348"/>
<dbReference type="UCSC" id="uc012bch.1">
    <property type="organism name" value="mouse"/>
</dbReference>
<dbReference type="AGR" id="MGI:1914659"/>
<dbReference type="CTD" id="57528"/>
<dbReference type="MGI" id="MGI:1914659">
    <property type="gene designation" value="Kctd16"/>
</dbReference>
<dbReference type="VEuPathDB" id="HostDB:ENSMUSG00000051401"/>
<dbReference type="eggNOG" id="KOG2723">
    <property type="taxonomic scope" value="Eukaryota"/>
</dbReference>
<dbReference type="GeneTree" id="ENSGT00940000156071"/>
<dbReference type="HOGENOM" id="CLU_057051_1_0_1"/>
<dbReference type="InParanoid" id="Q5DTY9"/>
<dbReference type="OMA" id="PHANVQT"/>
<dbReference type="OrthoDB" id="2414723at2759"/>
<dbReference type="PhylomeDB" id="Q5DTY9"/>
<dbReference type="TreeFam" id="TF315332"/>
<dbReference type="BioGRID-ORCS" id="383348">
    <property type="hits" value="1 hit in 78 CRISPR screens"/>
</dbReference>
<dbReference type="CD-CODE" id="CE726F99">
    <property type="entry name" value="Postsynaptic density"/>
</dbReference>
<dbReference type="ChiTaRS" id="Kctd16">
    <property type="organism name" value="mouse"/>
</dbReference>
<dbReference type="PRO" id="PR:Q5DTY9"/>
<dbReference type="Proteomes" id="UP000000589">
    <property type="component" value="Chromosome 18"/>
</dbReference>
<dbReference type="RNAct" id="Q5DTY9">
    <property type="molecule type" value="protein"/>
</dbReference>
<dbReference type="Bgee" id="ENSMUSG00000051401">
    <property type="expression patterns" value="Expressed in spermatid and 99 other cell types or tissues"/>
</dbReference>
<dbReference type="ExpressionAtlas" id="Q5DTY9">
    <property type="expression patterns" value="baseline and differential"/>
</dbReference>
<dbReference type="GO" id="GO:0042995">
    <property type="term" value="C:cell projection"/>
    <property type="evidence" value="ECO:0007669"/>
    <property type="project" value="UniProtKB-KW"/>
</dbReference>
<dbReference type="GO" id="GO:0045211">
    <property type="term" value="C:postsynaptic membrane"/>
    <property type="evidence" value="ECO:0000314"/>
    <property type="project" value="MGI"/>
</dbReference>
<dbReference type="GO" id="GO:0042734">
    <property type="term" value="C:presynaptic membrane"/>
    <property type="evidence" value="ECO:0000314"/>
    <property type="project" value="MGI"/>
</dbReference>
<dbReference type="GO" id="GO:0043235">
    <property type="term" value="C:receptor complex"/>
    <property type="evidence" value="ECO:0000314"/>
    <property type="project" value="MGI"/>
</dbReference>
<dbReference type="GO" id="GO:0099579">
    <property type="term" value="F:G protein-coupled neurotransmitter receptor activity involved in regulation of postsynaptic membrane potential"/>
    <property type="evidence" value="ECO:0007669"/>
    <property type="project" value="Ensembl"/>
</dbReference>
<dbReference type="GO" id="GO:0150047">
    <property type="term" value="F:G protein-coupled neurotransmitter receptor activity involved in regulation of presynaptic membrane potential"/>
    <property type="evidence" value="ECO:0007669"/>
    <property type="project" value="Ensembl"/>
</dbReference>
<dbReference type="GO" id="GO:0001662">
    <property type="term" value="P:behavioral fear response"/>
    <property type="evidence" value="ECO:0000315"/>
    <property type="project" value="MGI"/>
</dbReference>
<dbReference type="GO" id="GO:0007613">
    <property type="term" value="P:memory"/>
    <property type="evidence" value="ECO:0000315"/>
    <property type="project" value="MGI"/>
</dbReference>
<dbReference type="GO" id="GO:0051260">
    <property type="term" value="P:protein homooligomerization"/>
    <property type="evidence" value="ECO:0007669"/>
    <property type="project" value="InterPro"/>
</dbReference>
<dbReference type="GO" id="GO:0008277">
    <property type="term" value="P:regulation of G protein-coupled receptor signaling pathway"/>
    <property type="evidence" value="ECO:0000316"/>
    <property type="project" value="MGI"/>
</dbReference>
<dbReference type="CDD" id="cd18398">
    <property type="entry name" value="BTB_POZ_KCTD16"/>
    <property type="match status" value="1"/>
</dbReference>
<dbReference type="CDD" id="cd22219">
    <property type="entry name" value="H1_KCTD16"/>
    <property type="match status" value="1"/>
</dbReference>
<dbReference type="FunFam" id="3.30.710.10:FF:000031">
    <property type="entry name" value="BTB/POZ domain-containing protein KCTD16"/>
    <property type="match status" value="1"/>
</dbReference>
<dbReference type="Gene3D" id="3.30.710.10">
    <property type="entry name" value="Potassium Channel Kv1.1, Chain A"/>
    <property type="match status" value="1"/>
</dbReference>
<dbReference type="InterPro" id="IPR000210">
    <property type="entry name" value="BTB/POZ_dom"/>
</dbReference>
<dbReference type="InterPro" id="IPR049903">
    <property type="entry name" value="H1_KCTD16"/>
</dbReference>
<dbReference type="InterPro" id="IPR011333">
    <property type="entry name" value="SKP1/BTB/POZ_sf"/>
</dbReference>
<dbReference type="InterPro" id="IPR003131">
    <property type="entry name" value="T1-type_BTB"/>
</dbReference>
<dbReference type="PANTHER" id="PTHR14499:SF28">
    <property type="entry name" value="BTB_POZ DOMAIN-CONTAINING PROTEIN KCTD16"/>
    <property type="match status" value="1"/>
</dbReference>
<dbReference type="PANTHER" id="PTHR14499">
    <property type="entry name" value="POTASSIUM CHANNEL TETRAMERIZATION DOMAIN-CONTAINING"/>
    <property type="match status" value="1"/>
</dbReference>
<dbReference type="Pfam" id="PF02214">
    <property type="entry name" value="BTB_2"/>
    <property type="match status" value="1"/>
</dbReference>
<dbReference type="Pfam" id="PF23110">
    <property type="entry name" value="H1_KCTD8_12_16"/>
    <property type="match status" value="1"/>
</dbReference>
<dbReference type="SMART" id="SM00225">
    <property type="entry name" value="BTB"/>
    <property type="match status" value="1"/>
</dbReference>
<dbReference type="SUPFAM" id="SSF54695">
    <property type="entry name" value="POZ domain"/>
    <property type="match status" value="1"/>
</dbReference>